<sequence length="313" mass="35483">MKLKIAVQMDHISTVSIAGDTSFALSLEAQRRGHQLFHYTPDRLSLRDGKVFARIEEMQVRDEKGSHYSLGEKVRTDLSEMDVVLLRQDPPFDMNYITTTHILERIHPKTLVVNDPAWVRNSPEKIFVTEFADLMPDTLITKDPLEVAAFRKEFGDIIVKPLYGNGGAGIFHLHEADRNLASLLEMFGQLFREPYIVQRYLKDVRKGDKRIILIDGEPVGAINRVPAEHDSRSNMHVGGRAEKTELTEREREICARIGPSLRERGFILVGIDVIGDYMTEINVTSPTGVREVQRFGGADIASLFWDAVEGKRK</sequence>
<keyword id="KW-0067">ATP-binding</keyword>
<keyword id="KW-0317">Glutathione biosynthesis</keyword>
<keyword id="KW-0436">Ligase</keyword>
<keyword id="KW-0460">Magnesium</keyword>
<keyword id="KW-0464">Manganese</keyword>
<keyword id="KW-0479">Metal-binding</keyword>
<keyword id="KW-0547">Nucleotide-binding</keyword>
<gene>
    <name evidence="2" type="primary">gshB</name>
    <name type="ordered locus">mll4735</name>
</gene>
<organism>
    <name type="scientific">Mesorhizobium japonicum (strain LMG 29417 / CECT 9101 / MAFF 303099)</name>
    <name type="common">Mesorhizobium loti (strain MAFF 303099)</name>
    <dbReference type="NCBI Taxonomy" id="266835"/>
    <lineage>
        <taxon>Bacteria</taxon>
        <taxon>Pseudomonadati</taxon>
        <taxon>Pseudomonadota</taxon>
        <taxon>Alphaproteobacteria</taxon>
        <taxon>Hyphomicrobiales</taxon>
        <taxon>Phyllobacteriaceae</taxon>
        <taxon>Mesorhizobium</taxon>
    </lineage>
</organism>
<protein>
    <recommendedName>
        <fullName evidence="2">Glutathione synthetase</fullName>
        <ecNumber evidence="2">6.3.2.3</ecNumber>
    </recommendedName>
    <alternativeName>
        <fullName evidence="2">GSH synthetase</fullName>
        <shortName evidence="2">GSH-S</shortName>
        <shortName evidence="2">GSHase</shortName>
    </alternativeName>
    <alternativeName>
        <fullName evidence="2">Glutathione synthase</fullName>
    </alternativeName>
</protein>
<feature type="chain" id="PRO_0000197480" description="Glutathione synthetase">
    <location>
        <begin position="1"/>
        <end position="313"/>
    </location>
</feature>
<feature type="domain" description="ATP-grasp" evidence="2">
    <location>
        <begin position="125"/>
        <end position="309"/>
    </location>
</feature>
<feature type="binding site" evidence="2">
    <location>
        <begin position="151"/>
        <end position="207"/>
    </location>
    <ligand>
        <name>ATP</name>
        <dbReference type="ChEBI" id="CHEBI:30616"/>
    </ligand>
</feature>
<feature type="binding site" evidence="2">
    <location>
        <position position="280"/>
    </location>
    <ligand>
        <name>Mg(2+)</name>
        <dbReference type="ChEBI" id="CHEBI:18420"/>
    </ligand>
</feature>
<feature type="binding site" evidence="2">
    <location>
        <position position="282"/>
    </location>
    <ligand>
        <name>Mg(2+)</name>
        <dbReference type="ChEBI" id="CHEBI:18420"/>
    </ligand>
</feature>
<evidence type="ECO:0000250" key="1"/>
<evidence type="ECO:0000255" key="2">
    <source>
        <dbReference type="HAMAP-Rule" id="MF_00162"/>
    </source>
</evidence>
<comment type="catalytic activity">
    <reaction evidence="2">
        <text>gamma-L-glutamyl-L-cysteine + glycine + ATP = glutathione + ADP + phosphate + H(+)</text>
        <dbReference type="Rhea" id="RHEA:13557"/>
        <dbReference type="ChEBI" id="CHEBI:15378"/>
        <dbReference type="ChEBI" id="CHEBI:30616"/>
        <dbReference type="ChEBI" id="CHEBI:43474"/>
        <dbReference type="ChEBI" id="CHEBI:57305"/>
        <dbReference type="ChEBI" id="CHEBI:57925"/>
        <dbReference type="ChEBI" id="CHEBI:58173"/>
        <dbReference type="ChEBI" id="CHEBI:456216"/>
        <dbReference type="EC" id="6.3.2.3"/>
    </reaction>
</comment>
<comment type="cofactor">
    <cofactor evidence="1">
        <name>Mg(2+)</name>
        <dbReference type="ChEBI" id="CHEBI:18420"/>
    </cofactor>
    <cofactor evidence="1">
        <name>Mn(2+)</name>
        <dbReference type="ChEBI" id="CHEBI:29035"/>
    </cofactor>
    <text evidence="1">Binds 1 Mg(2+) or Mn(2+) ion per subunit.</text>
</comment>
<comment type="pathway">
    <text evidence="2">Sulfur metabolism; glutathione biosynthesis; glutathione from L-cysteine and L-glutamate: step 2/2.</text>
</comment>
<comment type="similarity">
    <text evidence="2">Belongs to the prokaryotic GSH synthase family.</text>
</comment>
<reference key="1">
    <citation type="journal article" date="2000" name="DNA Res.">
        <title>Complete genome structure of the nitrogen-fixing symbiotic bacterium Mesorhizobium loti.</title>
        <authorList>
            <person name="Kaneko T."/>
            <person name="Nakamura Y."/>
            <person name="Sato S."/>
            <person name="Asamizu E."/>
            <person name="Kato T."/>
            <person name="Sasamoto S."/>
            <person name="Watanabe A."/>
            <person name="Idesawa K."/>
            <person name="Ishikawa A."/>
            <person name="Kawashima K."/>
            <person name="Kimura T."/>
            <person name="Kishida Y."/>
            <person name="Kiyokawa C."/>
            <person name="Kohara M."/>
            <person name="Matsumoto M."/>
            <person name="Matsuno A."/>
            <person name="Mochizuki Y."/>
            <person name="Nakayama S."/>
            <person name="Nakazaki N."/>
            <person name="Shimpo S."/>
            <person name="Sugimoto M."/>
            <person name="Takeuchi C."/>
            <person name="Yamada M."/>
            <person name="Tabata S."/>
        </authorList>
    </citation>
    <scope>NUCLEOTIDE SEQUENCE [LARGE SCALE GENOMIC DNA]</scope>
    <source>
        <strain>LMG 29417 / CECT 9101 / MAFF 303099</strain>
    </source>
</reference>
<dbReference type="EC" id="6.3.2.3" evidence="2"/>
<dbReference type="EMBL" id="BA000012">
    <property type="protein sequence ID" value="BAB51323.1"/>
    <property type="molecule type" value="Genomic_DNA"/>
</dbReference>
<dbReference type="RefSeq" id="WP_010912665.1">
    <property type="nucleotide sequence ID" value="NC_002678.2"/>
</dbReference>
<dbReference type="SMR" id="Q98DE8"/>
<dbReference type="GeneID" id="66680982"/>
<dbReference type="KEGG" id="mlo:mll4735"/>
<dbReference type="eggNOG" id="COG0189">
    <property type="taxonomic scope" value="Bacteria"/>
</dbReference>
<dbReference type="HOGENOM" id="CLU_068239_0_0_5"/>
<dbReference type="UniPathway" id="UPA00142">
    <property type="reaction ID" value="UER00210"/>
</dbReference>
<dbReference type="Proteomes" id="UP000000552">
    <property type="component" value="Chromosome"/>
</dbReference>
<dbReference type="GO" id="GO:0005737">
    <property type="term" value="C:cytoplasm"/>
    <property type="evidence" value="ECO:0007669"/>
    <property type="project" value="TreeGrafter"/>
</dbReference>
<dbReference type="GO" id="GO:0005524">
    <property type="term" value="F:ATP binding"/>
    <property type="evidence" value="ECO:0007669"/>
    <property type="project" value="UniProtKB-UniRule"/>
</dbReference>
<dbReference type="GO" id="GO:0004363">
    <property type="term" value="F:glutathione synthase activity"/>
    <property type="evidence" value="ECO:0007669"/>
    <property type="project" value="UniProtKB-UniRule"/>
</dbReference>
<dbReference type="GO" id="GO:0046872">
    <property type="term" value="F:metal ion binding"/>
    <property type="evidence" value="ECO:0007669"/>
    <property type="project" value="UniProtKB-KW"/>
</dbReference>
<dbReference type="Gene3D" id="3.40.50.20">
    <property type="match status" value="1"/>
</dbReference>
<dbReference type="Gene3D" id="3.30.1490.20">
    <property type="entry name" value="ATP-grasp fold, A domain"/>
    <property type="match status" value="1"/>
</dbReference>
<dbReference type="Gene3D" id="3.30.470.20">
    <property type="entry name" value="ATP-grasp fold, B domain"/>
    <property type="match status" value="1"/>
</dbReference>
<dbReference type="HAMAP" id="MF_00162">
    <property type="entry name" value="GSH_S"/>
    <property type="match status" value="1"/>
</dbReference>
<dbReference type="InterPro" id="IPR011761">
    <property type="entry name" value="ATP-grasp"/>
</dbReference>
<dbReference type="InterPro" id="IPR013815">
    <property type="entry name" value="ATP_grasp_subdomain_1"/>
</dbReference>
<dbReference type="InterPro" id="IPR006284">
    <property type="entry name" value="Glut_synth_pro"/>
</dbReference>
<dbReference type="InterPro" id="IPR004218">
    <property type="entry name" value="GSHS_ATP-bd"/>
</dbReference>
<dbReference type="InterPro" id="IPR004215">
    <property type="entry name" value="GSHS_N"/>
</dbReference>
<dbReference type="InterPro" id="IPR016185">
    <property type="entry name" value="PreATP-grasp_dom_sf"/>
</dbReference>
<dbReference type="NCBIfam" id="TIGR01380">
    <property type="entry name" value="glut_syn"/>
    <property type="match status" value="1"/>
</dbReference>
<dbReference type="NCBIfam" id="NF003573">
    <property type="entry name" value="PRK05246.1"/>
    <property type="match status" value="1"/>
</dbReference>
<dbReference type="PANTHER" id="PTHR21621:SF4">
    <property type="entry name" value="GLUTATHIONE SYNTHETASE"/>
    <property type="match status" value="1"/>
</dbReference>
<dbReference type="PANTHER" id="PTHR21621">
    <property type="entry name" value="RIBOSOMAL PROTEIN S6 MODIFICATION PROTEIN"/>
    <property type="match status" value="1"/>
</dbReference>
<dbReference type="Pfam" id="PF02955">
    <property type="entry name" value="GSH-S_ATP"/>
    <property type="match status" value="1"/>
</dbReference>
<dbReference type="Pfam" id="PF02951">
    <property type="entry name" value="GSH-S_N"/>
    <property type="match status" value="1"/>
</dbReference>
<dbReference type="SUPFAM" id="SSF56059">
    <property type="entry name" value="Glutathione synthetase ATP-binding domain-like"/>
    <property type="match status" value="1"/>
</dbReference>
<dbReference type="SUPFAM" id="SSF52440">
    <property type="entry name" value="PreATP-grasp domain"/>
    <property type="match status" value="1"/>
</dbReference>
<dbReference type="PROSITE" id="PS50975">
    <property type="entry name" value="ATP_GRASP"/>
    <property type="match status" value="1"/>
</dbReference>
<proteinExistence type="inferred from homology"/>
<accession>Q98DE8</accession>
<name>GSHB_RHILO</name>